<sequence>MVSSVLPNPTSAECWAALLHDPMTLDMDAVLSDFVRSTGAEPGLARDLLEGKNWDLTAALSDYEQLRQVHTANLPHVFNEGRGPKQPEREPQPGHKVERPCLQRQDDIAQEKRLSRGISHASSAIVSLARSHVASECNNEQFPLEMPIYTFQLPDLSVYSEDFRSFIERDLIEQATMVALEQAGRLNWWSTVCTSCKRLLPLATTGDGNCLLHAASLGMWGFHDRDLVLRKALYTMMRTGAEREALKRRWRWQQTQQNKEEEWEREWTELLKLASSEPRTHFSKNGGTGGGVDNSEDPVYESLEEFHVFVLAHILRRPIVVVADTMLRDSGGEAFAPIPFGGIYLPLEVPPNRCHCSPLVLAYDQAHFSALVSMEQRDQQREQAVIPLTDSEHKLLPLHFAVDPGKDWEWGKDDNDNARLAHLILSLEAKLNLLHSYMNVTWIRIPSETRAPLAQPESPTASAGEDVQSLADSLDSDRDSVCSNSNSNNGKNGKDKEKEKQRKEKDKTRADSVANKLGSFSKTLGIKLKKNMGGLGGLVHGKMGRANSANGKNGDSAERGKEKKAKSRKGSKEESGASASTSPSEKTTPSPTDKAAGASPAEKGGGPRGDAWKYSTDVKLSLNILRAAMQGERKFIFAGLLLTSHRHQFHEEMIGYYLTSAQERFSAEQEQRRRDAATAAAAAAAAAAATAKRPPRRPETEGVPVPERASPGPPTQLVLKLKERPSPGPAAGRAARAAAGGTASPGGGARRASASGPVPGRSPPAPARQSVIHVQASGARDEACAPAVGALRPCATYPQQNRSLSSQSYSPARAAALRTVNTVESLARAVPGALPGAAGTAGAAEHKSQTYTNGFGALRDGLEFADADAPTARSNGECGRGGPGPVQRRCQRENCAFYGRAETEHYCSYCYREELRRRREARGARP</sequence>
<protein>
    <recommendedName>
        <fullName>OTU domain-containing protein 7A</fullName>
        <ecNumber>3.4.19.12</ecNumber>
    </recommendedName>
    <alternativeName>
        <fullName>Zinc finger protein Cezanne 2</fullName>
    </alternativeName>
</protein>
<comment type="function">
    <text evidence="7 8 13">Deubiquitinase, which cleaves 'Lys-11'-linked polyubiquitin chains. Might be required for PA28-20S proteasome assembly (Probable).</text>
</comment>
<comment type="catalytic activity">
    <reaction evidence="8">
        <text>Thiol-dependent hydrolysis of ester, thioester, amide, peptide and isopeptide bonds formed by the C-terminal Gly of ubiquitin (a 76-residue protein attached to proteins as an intracellular targeting signal).</text>
        <dbReference type="EC" id="3.4.19.12"/>
    </reaction>
</comment>
<comment type="subcellular location">
    <subcellularLocation>
        <location evidence="1">Cytoplasm</location>
    </subcellularLocation>
    <subcellularLocation>
        <location evidence="1">Nucleus</location>
    </subcellularLocation>
</comment>
<comment type="alternative products">
    <event type="alternative splicing"/>
    <isoform>
        <id>Q8TE49-1</id>
        <name>1</name>
        <sequence type="displayed"/>
    </isoform>
    <isoform>
        <id>Q8TE49-2</id>
        <name>2</name>
        <sequence type="described" ref="VSP_011430"/>
    </isoform>
</comment>
<comment type="disease" evidence="9 10">
    <disease id="DI-06887">
        <name>Neurodevelopmental disorder with hypotonia and seizures</name>
        <acronym>NEDHS</acronym>
        <description>An autosomal recessive, severe disorder characterized by global developmental delay, language impairment, impaired intellectual development, hypotonia, and early-onset seizures.</description>
        <dbReference type="MIM" id="620790"/>
    </disease>
    <text>The disease is caused by variants affecting the gene represented in this entry.</text>
</comment>
<comment type="similarity">
    <text evidence="12">Belongs to the peptidase C64 family.</text>
</comment>
<organism>
    <name type="scientific">Homo sapiens</name>
    <name type="common">Human</name>
    <dbReference type="NCBI Taxonomy" id="9606"/>
    <lineage>
        <taxon>Eukaryota</taxon>
        <taxon>Metazoa</taxon>
        <taxon>Chordata</taxon>
        <taxon>Craniata</taxon>
        <taxon>Vertebrata</taxon>
        <taxon>Euteleostomi</taxon>
        <taxon>Mammalia</taxon>
        <taxon>Eutheria</taxon>
        <taxon>Euarchontoglires</taxon>
        <taxon>Primates</taxon>
        <taxon>Haplorrhini</taxon>
        <taxon>Catarrhini</taxon>
        <taxon>Hominidae</taxon>
        <taxon>Homo</taxon>
    </lineage>
</organism>
<accession>Q8TE49</accession>
<accession>Q8IWK5</accession>
<gene>
    <name type="primary">OTUD7A</name>
    <name type="synonym">C15orf16</name>
    <name type="synonym">CEZANNE2</name>
    <name type="synonym">OTUD7</name>
</gene>
<proteinExistence type="evidence at protein level"/>
<dbReference type="EC" id="3.4.19.12"/>
<dbReference type="EMBL" id="AJ430383">
    <property type="protein sequence ID" value="CAD23047.1"/>
    <property type="molecule type" value="mRNA"/>
</dbReference>
<dbReference type="EMBL" id="BC035668">
    <property type="protein sequence ID" value="AAH35668.1"/>
    <property type="molecule type" value="mRNA"/>
</dbReference>
<dbReference type="CCDS" id="CCDS10026.1">
    <molecule id="Q8TE49-1"/>
</dbReference>
<dbReference type="CCDS" id="CCDS91972.1">
    <molecule id="Q8TE49-2"/>
</dbReference>
<dbReference type="RefSeq" id="NP_001369566.1">
    <molecule id="Q8TE49-2"/>
    <property type="nucleotide sequence ID" value="NM_001382637.1"/>
</dbReference>
<dbReference type="RefSeq" id="NP_570971.1">
    <molecule id="Q8TE49-1"/>
    <property type="nucleotide sequence ID" value="NM_130901.3"/>
</dbReference>
<dbReference type="PDB" id="2L2D">
    <property type="method" value="NMR"/>
    <property type="chains" value="A=11-83"/>
</dbReference>
<dbReference type="PDBsum" id="2L2D"/>
<dbReference type="BMRB" id="Q8TE49"/>
<dbReference type="SMR" id="Q8TE49"/>
<dbReference type="BioGRID" id="127799">
    <property type="interactions" value="23"/>
</dbReference>
<dbReference type="FunCoup" id="Q8TE49">
    <property type="interactions" value="1481"/>
</dbReference>
<dbReference type="IntAct" id="Q8TE49">
    <property type="interactions" value="6"/>
</dbReference>
<dbReference type="STRING" id="9606.ENSP00000305926"/>
<dbReference type="MEROPS" id="C64.002"/>
<dbReference type="GlyGen" id="Q8TE49">
    <property type="glycosylation" value="1 site, 1 O-linked glycan (1 site)"/>
</dbReference>
<dbReference type="iPTMnet" id="Q8TE49"/>
<dbReference type="PhosphoSitePlus" id="Q8TE49"/>
<dbReference type="SwissPalm" id="Q8TE49"/>
<dbReference type="BioMuta" id="OTUD7A"/>
<dbReference type="DMDM" id="51701344"/>
<dbReference type="jPOST" id="Q8TE49"/>
<dbReference type="MassIVE" id="Q8TE49"/>
<dbReference type="PaxDb" id="9606-ENSP00000305926"/>
<dbReference type="PeptideAtlas" id="Q8TE49"/>
<dbReference type="ProteomicsDB" id="74392">
    <molecule id="Q8TE49-1"/>
</dbReference>
<dbReference type="ProteomicsDB" id="74393">
    <molecule id="Q8TE49-2"/>
</dbReference>
<dbReference type="Antibodypedia" id="22563">
    <property type="antibodies" value="91 antibodies from 19 providers"/>
</dbReference>
<dbReference type="DNASU" id="161725"/>
<dbReference type="Ensembl" id="ENST00000307050.6">
    <molecule id="Q8TE49-2"/>
    <property type="protein sequence ID" value="ENSP00000305926.5"/>
    <property type="gene ID" value="ENSG00000169918.10"/>
</dbReference>
<dbReference type="Ensembl" id="ENST00000560598.2">
    <molecule id="Q8TE49-1"/>
    <property type="protein sequence ID" value="ENSP00000453883.2"/>
    <property type="gene ID" value="ENSG00000169918.10"/>
</dbReference>
<dbReference type="Ensembl" id="ENST00000678495.1">
    <molecule id="Q8TE49-1"/>
    <property type="protein sequence ID" value="ENSP00000503326.1"/>
    <property type="gene ID" value="ENSG00000169918.10"/>
</dbReference>
<dbReference type="GeneID" id="161725"/>
<dbReference type="KEGG" id="hsa:161725"/>
<dbReference type="MANE-Select" id="ENST00000307050.6">
    <molecule id="Q8TE49-2"/>
    <property type="protein sequence ID" value="ENSP00000305926.5"/>
    <property type="RefSeq nucleotide sequence ID" value="NM_001382637.1"/>
    <property type="RefSeq protein sequence ID" value="NP_001369566.1"/>
</dbReference>
<dbReference type="UCSC" id="uc001zfq.4">
    <molecule id="Q8TE49-1"/>
    <property type="organism name" value="human"/>
</dbReference>
<dbReference type="AGR" id="HGNC:20718"/>
<dbReference type="CTD" id="161725"/>
<dbReference type="DisGeNET" id="161725"/>
<dbReference type="GeneCards" id="OTUD7A"/>
<dbReference type="GeneReviews" id="OTUD7A"/>
<dbReference type="HGNC" id="HGNC:20718">
    <property type="gene designation" value="OTUD7A"/>
</dbReference>
<dbReference type="HPA" id="ENSG00000169918">
    <property type="expression patterns" value="Tissue enhanced (brain)"/>
</dbReference>
<dbReference type="MalaCards" id="OTUD7A"/>
<dbReference type="MIM" id="612024">
    <property type="type" value="gene"/>
</dbReference>
<dbReference type="MIM" id="620790">
    <property type="type" value="phenotype"/>
</dbReference>
<dbReference type="neXtProt" id="NX_Q8TE49"/>
<dbReference type="OpenTargets" id="ENSG00000169918"/>
<dbReference type="PharmGKB" id="PA134877572"/>
<dbReference type="VEuPathDB" id="HostDB:ENSG00000169918"/>
<dbReference type="eggNOG" id="KOG4345">
    <property type="taxonomic scope" value="Eukaryota"/>
</dbReference>
<dbReference type="GeneTree" id="ENSGT00940000158999"/>
<dbReference type="HOGENOM" id="CLU_013263_0_0_1"/>
<dbReference type="InParanoid" id="Q8TE49"/>
<dbReference type="OMA" id="HGKMGRS"/>
<dbReference type="OrthoDB" id="10064699at2759"/>
<dbReference type="PAN-GO" id="Q8TE49">
    <property type="GO annotations" value="9 GO annotations based on evolutionary models"/>
</dbReference>
<dbReference type="PhylomeDB" id="Q8TE49"/>
<dbReference type="TreeFam" id="TF323312"/>
<dbReference type="PathwayCommons" id="Q8TE49"/>
<dbReference type="Reactome" id="R-HSA-5689896">
    <property type="pathway name" value="Ovarian tumor domain proteases"/>
</dbReference>
<dbReference type="SignaLink" id="Q8TE49"/>
<dbReference type="SIGNOR" id="Q8TE49"/>
<dbReference type="BioGRID-ORCS" id="161725">
    <property type="hits" value="21 hits in 1195 CRISPR screens"/>
</dbReference>
<dbReference type="ChiTaRS" id="OTUD7A">
    <property type="organism name" value="human"/>
</dbReference>
<dbReference type="EvolutionaryTrace" id="Q8TE49"/>
<dbReference type="GenomeRNAi" id="161725"/>
<dbReference type="Pharos" id="Q8TE49">
    <property type="development level" value="Tbio"/>
</dbReference>
<dbReference type="PRO" id="PR:Q8TE49"/>
<dbReference type="Proteomes" id="UP000005640">
    <property type="component" value="Chromosome 15"/>
</dbReference>
<dbReference type="RNAct" id="Q8TE49">
    <property type="molecule type" value="protein"/>
</dbReference>
<dbReference type="Bgee" id="ENSG00000169918">
    <property type="expression patterns" value="Expressed in endothelial cell and 124 other cell types or tissues"/>
</dbReference>
<dbReference type="ExpressionAtlas" id="Q8TE49">
    <property type="expression patterns" value="baseline and differential"/>
</dbReference>
<dbReference type="GO" id="GO:0005737">
    <property type="term" value="C:cytoplasm"/>
    <property type="evidence" value="ECO:0000318"/>
    <property type="project" value="GO_Central"/>
</dbReference>
<dbReference type="GO" id="GO:0005829">
    <property type="term" value="C:cytosol"/>
    <property type="evidence" value="ECO:0000304"/>
    <property type="project" value="Reactome"/>
</dbReference>
<dbReference type="GO" id="GO:0005634">
    <property type="term" value="C:nucleus"/>
    <property type="evidence" value="ECO:0000318"/>
    <property type="project" value="GO_Central"/>
</dbReference>
<dbReference type="GO" id="GO:0004843">
    <property type="term" value="F:cysteine-type deubiquitinase activity"/>
    <property type="evidence" value="ECO:0000314"/>
    <property type="project" value="UniProtKB"/>
</dbReference>
<dbReference type="GO" id="GO:0003677">
    <property type="term" value="F:DNA binding"/>
    <property type="evidence" value="ECO:0007669"/>
    <property type="project" value="InterPro"/>
</dbReference>
<dbReference type="GO" id="GO:0070530">
    <property type="term" value="F:K63-linked polyubiquitin modification-dependent protein binding"/>
    <property type="evidence" value="ECO:0000318"/>
    <property type="project" value="GO_Central"/>
</dbReference>
<dbReference type="GO" id="GO:0008270">
    <property type="term" value="F:zinc ion binding"/>
    <property type="evidence" value="ECO:0007669"/>
    <property type="project" value="UniProtKB-KW"/>
</dbReference>
<dbReference type="GO" id="GO:0016579">
    <property type="term" value="P:protein deubiquitination"/>
    <property type="evidence" value="ECO:0000304"/>
    <property type="project" value="Reactome"/>
</dbReference>
<dbReference type="GO" id="GO:0071947">
    <property type="term" value="P:protein deubiquitination involved in ubiquitin-dependent protein catabolic process"/>
    <property type="evidence" value="ECO:0000318"/>
    <property type="project" value="GO_Central"/>
</dbReference>
<dbReference type="GO" id="GO:0035871">
    <property type="term" value="P:protein K11-linked deubiquitination"/>
    <property type="evidence" value="ECO:0000314"/>
    <property type="project" value="UniProtKB"/>
</dbReference>
<dbReference type="CDD" id="cd22773">
    <property type="entry name" value="OTU_OTUD7A"/>
    <property type="match status" value="1"/>
</dbReference>
<dbReference type="CDD" id="cd14347">
    <property type="entry name" value="UBA_Cezanne_like"/>
    <property type="match status" value="1"/>
</dbReference>
<dbReference type="FunFam" id="1.10.8.10:FF:000017">
    <property type="entry name" value="OTU domain-containing protein 7A"/>
    <property type="match status" value="1"/>
</dbReference>
<dbReference type="Gene3D" id="1.20.5.4770">
    <property type="match status" value="1"/>
</dbReference>
<dbReference type="Gene3D" id="1.10.8.10">
    <property type="entry name" value="DNA helicase RuvA subunit, C-terminal domain"/>
    <property type="match status" value="1"/>
</dbReference>
<dbReference type="InterPro" id="IPR051346">
    <property type="entry name" value="OTU_Deubiquitinase"/>
</dbReference>
<dbReference type="InterPro" id="IPR003323">
    <property type="entry name" value="OTU_dom"/>
</dbReference>
<dbReference type="InterPro" id="IPR054109">
    <property type="entry name" value="UBA_8"/>
</dbReference>
<dbReference type="InterPro" id="IPR002653">
    <property type="entry name" value="Znf_A20"/>
</dbReference>
<dbReference type="PANTHER" id="PTHR13367:SF9">
    <property type="entry name" value="OTU DOMAIN-CONTAINING PROTEIN 7A"/>
    <property type="match status" value="1"/>
</dbReference>
<dbReference type="PANTHER" id="PTHR13367">
    <property type="entry name" value="UBIQUITIN THIOESTERASE"/>
    <property type="match status" value="1"/>
</dbReference>
<dbReference type="Pfam" id="PF02338">
    <property type="entry name" value="OTU"/>
    <property type="match status" value="1"/>
</dbReference>
<dbReference type="Pfam" id="PF22566">
    <property type="entry name" value="UBA_8"/>
    <property type="match status" value="1"/>
</dbReference>
<dbReference type="Pfam" id="PF01754">
    <property type="entry name" value="zf-A20"/>
    <property type="match status" value="1"/>
</dbReference>
<dbReference type="SMART" id="SM00259">
    <property type="entry name" value="ZnF_A20"/>
    <property type="match status" value="1"/>
</dbReference>
<dbReference type="SUPFAM" id="SSF57716">
    <property type="entry name" value="Glucocorticoid receptor-like (DNA-binding domain)"/>
    <property type="match status" value="1"/>
</dbReference>
<dbReference type="PROSITE" id="PS50802">
    <property type="entry name" value="OTU"/>
    <property type="match status" value="1"/>
</dbReference>
<dbReference type="PROSITE" id="PS51036">
    <property type="entry name" value="ZF_A20"/>
    <property type="match status" value="1"/>
</dbReference>
<feature type="chain" id="PRO_0000188789" description="OTU domain-containing protein 7A">
    <location>
        <begin position="1"/>
        <end position="926"/>
    </location>
</feature>
<feature type="domain" description="OTU" evidence="4">
    <location>
        <begin position="199"/>
        <end position="374"/>
    </location>
</feature>
<feature type="zinc finger region" description="A20-type" evidence="5">
    <location>
        <begin position="884"/>
        <end position="919"/>
    </location>
</feature>
<feature type="region of interest" description="Disordered" evidence="6">
    <location>
        <begin position="75"/>
        <end position="99"/>
    </location>
</feature>
<feature type="region of interest" description="TRAF-binding" evidence="1">
    <location>
        <begin position="168"/>
        <end position="410"/>
    </location>
</feature>
<feature type="region of interest" description="Catalytic" evidence="1">
    <location>
        <begin position="183"/>
        <end position="449"/>
    </location>
</feature>
<feature type="region of interest" description="Disordered" evidence="6">
    <location>
        <begin position="452"/>
        <end position="514"/>
    </location>
</feature>
<feature type="region of interest" description="Disordered" evidence="6">
    <location>
        <begin position="537"/>
        <end position="613"/>
    </location>
</feature>
<feature type="region of interest" description="Disordered" evidence="6">
    <location>
        <begin position="668"/>
        <end position="768"/>
    </location>
</feature>
<feature type="short sequence motif" description="Nuclear localization signal" evidence="3">
    <location>
        <begin position="494"/>
        <end position="509"/>
    </location>
</feature>
<feature type="compositionally biased region" description="Basic and acidic residues" evidence="6">
    <location>
        <begin position="82"/>
        <end position="99"/>
    </location>
</feature>
<feature type="compositionally biased region" description="Low complexity" evidence="6">
    <location>
        <begin position="481"/>
        <end position="491"/>
    </location>
</feature>
<feature type="compositionally biased region" description="Basic and acidic residues" evidence="6">
    <location>
        <begin position="492"/>
        <end position="510"/>
    </location>
</feature>
<feature type="compositionally biased region" description="Low complexity" evidence="6">
    <location>
        <begin position="576"/>
        <end position="592"/>
    </location>
</feature>
<feature type="compositionally biased region" description="Low complexity" evidence="6">
    <location>
        <begin position="677"/>
        <end position="691"/>
    </location>
</feature>
<feature type="compositionally biased region" description="Low complexity" evidence="6">
    <location>
        <begin position="729"/>
        <end position="742"/>
    </location>
</feature>
<feature type="active site" evidence="1">
    <location>
        <position position="207"/>
    </location>
</feature>
<feature type="active site" description="Nucleophile" evidence="1">
    <location>
        <position position="210"/>
    </location>
</feature>
<feature type="active site" description="Proton acceptor" evidence="1">
    <location>
        <position position="367"/>
    </location>
</feature>
<feature type="binding site" evidence="5">
    <location>
        <position position="890"/>
    </location>
    <ligand>
        <name>Zn(2+)</name>
        <dbReference type="ChEBI" id="CHEBI:29105"/>
    </ligand>
</feature>
<feature type="binding site" evidence="5">
    <location>
        <position position="895"/>
    </location>
    <ligand>
        <name>Zn(2+)</name>
        <dbReference type="ChEBI" id="CHEBI:29105"/>
    </ligand>
</feature>
<feature type="binding site" evidence="5">
    <location>
        <position position="907"/>
    </location>
    <ligand>
        <name>Zn(2+)</name>
        <dbReference type="ChEBI" id="CHEBI:29105"/>
    </ligand>
</feature>
<feature type="binding site" evidence="5">
    <location>
        <position position="910"/>
    </location>
    <ligand>
        <name>Zn(2+)</name>
        <dbReference type="ChEBI" id="CHEBI:29105"/>
    </ligand>
</feature>
<feature type="modified residue" description="Phosphoserine" evidence="2">
    <location>
        <position position="119"/>
    </location>
</feature>
<feature type="modified residue" description="Omega-N-methylarginine" evidence="2">
    <location>
        <position position="880"/>
    </location>
</feature>
<feature type="splice variant" id="VSP_011430" description="In isoform 2." evidence="11">
    <original>E</original>
    <variation>ESGLVYTE</variation>
    <location>
        <position position="260"/>
    </location>
</feature>
<feature type="sequence variant" id="VAR_089548" description="In NEDHS; uncertain significance; decreased proteasomal activity." evidence="9">
    <original>L</original>
    <variation>F</variation>
    <location>
        <position position="233"/>
    </location>
</feature>
<feature type="strand" evidence="14">
    <location>
        <begin position="13"/>
        <end position="15"/>
    </location>
</feature>
<feature type="strand" evidence="14">
    <location>
        <begin position="22"/>
        <end position="24"/>
    </location>
</feature>
<feature type="helix" evidence="14">
    <location>
        <begin position="27"/>
        <end position="38"/>
    </location>
</feature>
<feature type="helix" evidence="14">
    <location>
        <begin position="42"/>
        <end position="51"/>
    </location>
</feature>
<feature type="turn" evidence="14">
    <location>
        <begin position="52"/>
        <end position="54"/>
    </location>
</feature>
<feature type="helix" evidence="14">
    <location>
        <begin position="56"/>
        <end position="68"/>
    </location>
</feature>
<feature type="strand" evidence="14">
    <location>
        <begin position="71"/>
        <end position="75"/>
    </location>
</feature>
<name>OTU7A_HUMAN</name>
<reference key="1">
    <citation type="submission" date="2002-02" db="EMBL/GenBank/DDBJ databases">
        <title>Isolation of a novel human gene, Cezanne 2.</title>
        <authorList>
            <person name="Evans P.C."/>
            <person name="Coadwell W.J."/>
            <person name="Kilshaw P.J."/>
        </authorList>
    </citation>
    <scope>NUCLEOTIDE SEQUENCE [MRNA] (ISOFORM 1)</scope>
</reference>
<reference key="2">
    <citation type="journal article" date="2004" name="Genome Res.">
        <title>The status, quality, and expansion of the NIH full-length cDNA project: the Mammalian Gene Collection (MGC).</title>
        <authorList>
            <consortium name="The MGC Project Team"/>
        </authorList>
    </citation>
    <scope>NUCLEOTIDE SEQUENCE [LARGE SCALE MRNA] OF 1-678 (ISOFORM 2)</scope>
    <source>
        <tissue>Brain</tissue>
    </source>
</reference>
<reference key="3">
    <citation type="journal article" date="2010" name="Nat. Struct. Mol. Biol.">
        <title>Lys11-linked ubiquitin chains adopt compact conformations and are preferentially hydrolyzed by the deubiquitinase Cezanne.</title>
        <authorList>
            <person name="Bremm A."/>
            <person name="Freund S.M."/>
            <person name="Komander D."/>
        </authorList>
    </citation>
    <scope>FUNCTION</scope>
</reference>
<reference key="4">
    <citation type="journal article" date="2013" name="Cell">
        <title>OTU deubiquitinases reveal mechanisms of linkage specificity and enable ubiquitin chain restriction analysis.</title>
        <authorList>
            <person name="Mevissen T.E."/>
            <person name="Hospenthal M.K."/>
            <person name="Geurink P.P."/>
            <person name="Elliott P.R."/>
            <person name="Akutsu M."/>
            <person name="Arnaudo N."/>
            <person name="Ekkebus R."/>
            <person name="Kulathu Y."/>
            <person name="Wauer T."/>
            <person name="El Oualid F."/>
            <person name="Freund S.M."/>
            <person name="Ovaa H."/>
            <person name="Komander D."/>
        </authorList>
    </citation>
    <scope>FUNCTION</scope>
    <scope>CATALYTIC ACTIVITY</scope>
</reference>
<reference key="5">
    <citation type="submission" date="2012-02" db="PDB data bank">
        <title>The amino-terminal UBA domain of OTUD7A.</title>
        <authorList>
            <consortium name="Structural genomics consortium (SGC)"/>
        </authorList>
    </citation>
    <scope>STRUCTURE BY NMR OF 11-83</scope>
</reference>
<reference key="6">
    <citation type="journal article" date="2020" name="Clin. Genet.">
        <title>Report of the first patient with a homozygous OTUD7A variant responsible for epileptic encephalopathy and related proteasome dysfunction.</title>
        <authorList>
            <person name="Garret P."/>
            <person name="Ebstein F."/>
            <person name="Delplancq G."/>
            <person name="Dozieres-Puyravel B."/>
            <person name="Boughalem A."/>
            <person name="Auvin S."/>
            <person name="Duffourd Y."/>
            <person name="Klafack S."/>
            <person name="Zieba B.A."/>
            <person name="Mahmoudi S."/>
            <person name="Singh K.K."/>
            <person name="Duplomb L."/>
            <person name="Thauvin-Robinet C."/>
            <person name="Costa J.M."/>
            <person name="Krueger E."/>
            <person name="Trost D."/>
            <person name="Verloes A."/>
            <person name="Faivre L."/>
            <person name="Vitobello A."/>
        </authorList>
    </citation>
    <scope>INVOLVEMENT IN NEDHS</scope>
    <scope>VARIANT NEDHS PHE-233</scope>
    <scope>CHARACTERIZATION OF VARIANT NEDHS PHE-233</scope>
    <scope>FUNCTION</scope>
</reference>
<reference key="7">
    <citation type="journal article" date="2021" name="Am. J. Med. Genet. A">
        <title>Biallelic loss of OTUD7A causes severe muscular hypotonia, intellectual disability, and seizures.</title>
        <authorList>
            <person name="Suzuki H."/>
            <person name="Inaba M."/>
            <person name="Yamada M."/>
            <person name="Uehara T."/>
            <person name="Takenouchi T."/>
            <person name="Mizuno S."/>
            <person name="Kosaki K."/>
            <person name="Doi M."/>
        </authorList>
    </citation>
    <scope>INVOLVEMENT IN NEDHS</scope>
</reference>
<keyword id="KW-0002">3D-structure</keyword>
<keyword id="KW-0025">Alternative splicing</keyword>
<keyword id="KW-0963">Cytoplasm</keyword>
<keyword id="KW-0378">Hydrolase</keyword>
<keyword id="KW-0991">Intellectual disability</keyword>
<keyword id="KW-0479">Metal-binding</keyword>
<keyword id="KW-0488">Methylation</keyword>
<keyword id="KW-0539">Nucleus</keyword>
<keyword id="KW-0597">Phosphoprotein</keyword>
<keyword id="KW-0645">Protease</keyword>
<keyword id="KW-1267">Proteomics identification</keyword>
<keyword id="KW-1185">Reference proteome</keyword>
<keyword id="KW-0788">Thiol protease</keyword>
<keyword id="KW-0833">Ubl conjugation pathway</keyword>
<keyword id="KW-0862">Zinc</keyword>
<keyword id="KW-0863">Zinc-finger</keyword>
<evidence type="ECO:0000250" key="1"/>
<evidence type="ECO:0000250" key="2">
    <source>
        <dbReference type="UniProtKB" id="Q8R554"/>
    </source>
</evidence>
<evidence type="ECO:0000255" key="3"/>
<evidence type="ECO:0000255" key="4">
    <source>
        <dbReference type="PROSITE-ProRule" id="PRU00139"/>
    </source>
</evidence>
<evidence type="ECO:0000255" key="5">
    <source>
        <dbReference type="PROSITE-ProRule" id="PRU00451"/>
    </source>
</evidence>
<evidence type="ECO:0000256" key="6">
    <source>
        <dbReference type="SAM" id="MobiDB-lite"/>
    </source>
</evidence>
<evidence type="ECO:0000269" key="7">
    <source>
    </source>
</evidence>
<evidence type="ECO:0000269" key="8">
    <source>
    </source>
</evidence>
<evidence type="ECO:0000269" key="9">
    <source>
    </source>
</evidence>
<evidence type="ECO:0000269" key="10">
    <source>
    </source>
</evidence>
<evidence type="ECO:0000303" key="11">
    <source>
    </source>
</evidence>
<evidence type="ECO:0000305" key="12"/>
<evidence type="ECO:0000305" key="13">
    <source>
    </source>
</evidence>
<evidence type="ECO:0007829" key="14">
    <source>
        <dbReference type="PDB" id="2L2D"/>
    </source>
</evidence>